<sequence length="595" mass="67840">MSTGDTVCMGWLIKSPPERKLQRYAWRKRWFVLRRGRMSGNPDVLEYYRNKHSNKPIRVIDLSECTVWKHAGPGFIRKEFQKNFVFIVKTTSRTFYLVAKTEEEMQVWVHSISQVCNFSHLEDGADSMESLSHMPSSFQPSPASSLHTVHVANSALLKDDRNTNSVVTEETRRESEFLFLPDYLILSNCETGRLHHASLPTRCDSWSNSNHSLAQTSFDDVFLDGLQPFISNNLVHPLHHGKVSQDFPSIRPQASLIWNREINGPSRNLMSSSPLLESSLNPTVHVEEKQVSLPSGVKELNIMSNTPPPRPPKPSYLSEQRQDQPLLTGHSSNKKPGYTMVPRRISLSGLDHVGSWKGDVQSQSLRHRDKRLSLNLPCKFSPIYPTASPSAEDSYVPMSPKGTASELRPHCSQDDYIPMSSSMLPELPADLEPPPVNRNLKPQRKSRPPPLDSRNLSTIQEHTSLTRTYTVPCNRTSFLSPQRNGINCARLFSTPSEEEEEEEEEEEEEEEEEKYIQMEEYGTVSSLSRSALSWTKKFSLDYLALDFNSTSPAPVQKKLLLSEEQRVDYVQVDEQKTQALRSTKQEWTDERQSKV</sequence>
<reference key="1">
    <citation type="journal article" date="2002" name="Mol. Cell. Biol.">
        <title>Gab3, a new DOS/Gab family member, facilitates macrophage differentiation.</title>
        <authorList>
            <person name="Wolf I."/>
            <person name="Jenkins B.J."/>
            <person name="Liu Y."/>
            <person name="Seiffert M."/>
            <person name="Custodio J.M."/>
            <person name="Young P."/>
            <person name="Rohrschneider L.R."/>
        </authorList>
    </citation>
    <scope>NUCLEOTIDE SEQUENCE [MRNA]</scope>
    <scope>INTERACTION WITH PIK3R AND SHP2</scope>
    <scope>INDUCTION BY M-CSF</scope>
    <scope>PHOSPHORYLATION</scope>
    <source>
        <strain>BALB/cJ</strain>
        <tissue>Spleen</tissue>
    </source>
</reference>
<reference key="2">
    <citation type="journal article" date="2005" name="Science">
        <title>The transcriptional landscape of the mammalian genome.</title>
        <authorList>
            <person name="Carninci P."/>
            <person name="Kasukawa T."/>
            <person name="Katayama S."/>
            <person name="Gough J."/>
            <person name="Frith M.C."/>
            <person name="Maeda N."/>
            <person name="Oyama R."/>
            <person name="Ravasi T."/>
            <person name="Lenhard B."/>
            <person name="Wells C."/>
            <person name="Kodzius R."/>
            <person name="Shimokawa K."/>
            <person name="Bajic V.B."/>
            <person name="Brenner S.E."/>
            <person name="Batalov S."/>
            <person name="Forrest A.R."/>
            <person name="Zavolan M."/>
            <person name="Davis M.J."/>
            <person name="Wilming L.G."/>
            <person name="Aidinis V."/>
            <person name="Allen J.E."/>
            <person name="Ambesi-Impiombato A."/>
            <person name="Apweiler R."/>
            <person name="Aturaliya R.N."/>
            <person name="Bailey T.L."/>
            <person name="Bansal M."/>
            <person name="Baxter L."/>
            <person name="Beisel K.W."/>
            <person name="Bersano T."/>
            <person name="Bono H."/>
            <person name="Chalk A.M."/>
            <person name="Chiu K.P."/>
            <person name="Choudhary V."/>
            <person name="Christoffels A."/>
            <person name="Clutterbuck D.R."/>
            <person name="Crowe M.L."/>
            <person name="Dalla E."/>
            <person name="Dalrymple B.P."/>
            <person name="de Bono B."/>
            <person name="Della Gatta G."/>
            <person name="di Bernardo D."/>
            <person name="Down T."/>
            <person name="Engstrom P."/>
            <person name="Fagiolini M."/>
            <person name="Faulkner G."/>
            <person name="Fletcher C.F."/>
            <person name="Fukushima T."/>
            <person name="Furuno M."/>
            <person name="Futaki S."/>
            <person name="Gariboldi M."/>
            <person name="Georgii-Hemming P."/>
            <person name="Gingeras T.R."/>
            <person name="Gojobori T."/>
            <person name="Green R.E."/>
            <person name="Gustincich S."/>
            <person name="Harbers M."/>
            <person name="Hayashi Y."/>
            <person name="Hensch T.K."/>
            <person name="Hirokawa N."/>
            <person name="Hill D."/>
            <person name="Huminiecki L."/>
            <person name="Iacono M."/>
            <person name="Ikeo K."/>
            <person name="Iwama A."/>
            <person name="Ishikawa T."/>
            <person name="Jakt M."/>
            <person name="Kanapin A."/>
            <person name="Katoh M."/>
            <person name="Kawasawa Y."/>
            <person name="Kelso J."/>
            <person name="Kitamura H."/>
            <person name="Kitano H."/>
            <person name="Kollias G."/>
            <person name="Krishnan S.P."/>
            <person name="Kruger A."/>
            <person name="Kummerfeld S.K."/>
            <person name="Kurochkin I.V."/>
            <person name="Lareau L.F."/>
            <person name="Lazarevic D."/>
            <person name="Lipovich L."/>
            <person name="Liu J."/>
            <person name="Liuni S."/>
            <person name="McWilliam S."/>
            <person name="Madan Babu M."/>
            <person name="Madera M."/>
            <person name="Marchionni L."/>
            <person name="Matsuda H."/>
            <person name="Matsuzawa S."/>
            <person name="Miki H."/>
            <person name="Mignone F."/>
            <person name="Miyake S."/>
            <person name="Morris K."/>
            <person name="Mottagui-Tabar S."/>
            <person name="Mulder N."/>
            <person name="Nakano N."/>
            <person name="Nakauchi H."/>
            <person name="Ng P."/>
            <person name="Nilsson R."/>
            <person name="Nishiguchi S."/>
            <person name="Nishikawa S."/>
            <person name="Nori F."/>
            <person name="Ohara O."/>
            <person name="Okazaki Y."/>
            <person name="Orlando V."/>
            <person name="Pang K.C."/>
            <person name="Pavan W.J."/>
            <person name="Pavesi G."/>
            <person name="Pesole G."/>
            <person name="Petrovsky N."/>
            <person name="Piazza S."/>
            <person name="Reed J."/>
            <person name="Reid J.F."/>
            <person name="Ring B.Z."/>
            <person name="Ringwald M."/>
            <person name="Rost B."/>
            <person name="Ruan Y."/>
            <person name="Salzberg S.L."/>
            <person name="Sandelin A."/>
            <person name="Schneider C."/>
            <person name="Schoenbach C."/>
            <person name="Sekiguchi K."/>
            <person name="Semple C.A."/>
            <person name="Seno S."/>
            <person name="Sessa L."/>
            <person name="Sheng Y."/>
            <person name="Shibata Y."/>
            <person name="Shimada H."/>
            <person name="Shimada K."/>
            <person name="Silva D."/>
            <person name="Sinclair B."/>
            <person name="Sperling S."/>
            <person name="Stupka E."/>
            <person name="Sugiura K."/>
            <person name="Sultana R."/>
            <person name="Takenaka Y."/>
            <person name="Taki K."/>
            <person name="Tammoja K."/>
            <person name="Tan S.L."/>
            <person name="Tang S."/>
            <person name="Taylor M.S."/>
            <person name="Tegner J."/>
            <person name="Teichmann S.A."/>
            <person name="Ueda H.R."/>
            <person name="van Nimwegen E."/>
            <person name="Verardo R."/>
            <person name="Wei C.L."/>
            <person name="Yagi K."/>
            <person name="Yamanishi H."/>
            <person name="Zabarovsky E."/>
            <person name="Zhu S."/>
            <person name="Zimmer A."/>
            <person name="Hide W."/>
            <person name="Bult C."/>
            <person name="Grimmond S.M."/>
            <person name="Teasdale R.D."/>
            <person name="Liu E.T."/>
            <person name="Brusic V."/>
            <person name="Quackenbush J."/>
            <person name="Wahlestedt C."/>
            <person name="Mattick J.S."/>
            <person name="Hume D.A."/>
            <person name="Kai C."/>
            <person name="Sasaki D."/>
            <person name="Tomaru Y."/>
            <person name="Fukuda S."/>
            <person name="Kanamori-Katayama M."/>
            <person name="Suzuki M."/>
            <person name="Aoki J."/>
            <person name="Arakawa T."/>
            <person name="Iida J."/>
            <person name="Imamura K."/>
            <person name="Itoh M."/>
            <person name="Kato T."/>
            <person name="Kawaji H."/>
            <person name="Kawagashira N."/>
            <person name="Kawashima T."/>
            <person name="Kojima M."/>
            <person name="Kondo S."/>
            <person name="Konno H."/>
            <person name="Nakano K."/>
            <person name="Ninomiya N."/>
            <person name="Nishio T."/>
            <person name="Okada M."/>
            <person name="Plessy C."/>
            <person name="Shibata K."/>
            <person name="Shiraki T."/>
            <person name="Suzuki S."/>
            <person name="Tagami M."/>
            <person name="Waki K."/>
            <person name="Watahiki A."/>
            <person name="Okamura-Oho Y."/>
            <person name="Suzuki H."/>
            <person name="Kawai J."/>
            <person name="Hayashizaki Y."/>
        </authorList>
    </citation>
    <scope>NUCLEOTIDE SEQUENCE [LARGE SCALE MRNA]</scope>
    <source>
        <strain>C57BL/6J</strain>
        <tissue>Forelimb</tissue>
    </source>
</reference>
<reference key="3">
    <citation type="journal article" date="2009" name="PLoS Biol.">
        <title>Lineage-specific biology revealed by a finished genome assembly of the mouse.</title>
        <authorList>
            <person name="Church D.M."/>
            <person name="Goodstadt L."/>
            <person name="Hillier L.W."/>
            <person name="Zody M.C."/>
            <person name="Goldstein S."/>
            <person name="She X."/>
            <person name="Bult C.J."/>
            <person name="Agarwala R."/>
            <person name="Cherry J.L."/>
            <person name="DiCuccio M."/>
            <person name="Hlavina W."/>
            <person name="Kapustin Y."/>
            <person name="Meric P."/>
            <person name="Maglott D."/>
            <person name="Birtle Z."/>
            <person name="Marques A.C."/>
            <person name="Graves T."/>
            <person name="Zhou S."/>
            <person name="Teague B."/>
            <person name="Potamousis K."/>
            <person name="Churas C."/>
            <person name="Place M."/>
            <person name="Herschleb J."/>
            <person name="Runnheim R."/>
            <person name="Forrest D."/>
            <person name="Amos-Landgraf J."/>
            <person name="Schwartz D.C."/>
            <person name="Cheng Z."/>
            <person name="Lindblad-Toh K."/>
            <person name="Eichler E.E."/>
            <person name="Ponting C.P."/>
        </authorList>
    </citation>
    <scope>NUCLEOTIDE SEQUENCE [LARGE SCALE GENOMIC DNA]</scope>
    <source>
        <strain>C57BL/6J</strain>
    </source>
</reference>
<reference key="4">
    <citation type="journal article" date="2006" name="BMC Genomics">
        <title>The systematic functional characterisation of Xq28 genes prioritises candidate disease genes.</title>
        <authorList>
            <person name="Kolb-Kokocinski A."/>
            <person name="Mehrle A."/>
            <person name="Bechtel S."/>
            <person name="Simpson J.C."/>
            <person name="Kioschis P."/>
            <person name="Wiemann S."/>
            <person name="Wellenreuther R."/>
            <person name="Poustka A."/>
        </authorList>
    </citation>
    <scope>NUCLEOTIDE SEQUENCE [MRNA] OF 330-579</scope>
    <source>
        <strain>NMRI</strain>
        <tissue>Brain</tissue>
        <tissue>Heart</tissue>
    </source>
</reference>
<reference key="5">
    <citation type="journal article" date="2002" name="Mol. Cell. Biol.">
        <title>Induced expression and association of the Mona/Gads adapter and Gab3 scaffolding protein during monocyte/macrophage differentiation.</title>
        <authorList>
            <person name="Bourgin C."/>
            <person name="Bourette R.P."/>
            <person name="Arnaud S."/>
            <person name="Liu Y."/>
            <person name="Rohrschneider L.R."/>
            <person name="Mouchiroud G."/>
        </authorList>
    </citation>
    <scope>INTERACTION WITH GRAP2</scope>
</reference>
<reference key="6">
    <citation type="journal article" date="2003" name="Mol. Cell. Biol.">
        <title>Gab3-deficient mice exhibit normal development and hematopoiesis and are immunocompetent.</title>
        <authorList>
            <person name="Seiffert M."/>
            <person name="Custodio J.M."/>
            <person name="Wolf I."/>
            <person name="Harkey M."/>
            <person name="Liu Y."/>
            <person name="Blattman J.N."/>
            <person name="Greenberg P.D."/>
            <person name="Rohrschneider L.R."/>
        </authorList>
    </citation>
    <scope>FUNCTION</scope>
</reference>
<organism>
    <name type="scientific">Mus musculus</name>
    <name type="common">Mouse</name>
    <dbReference type="NCBI Taxonomy" id="10090"/>
    <lineage>
        <taxon>Eukaryota</taxon>
        <taxon>Metazoa</taxon>
        <taxon>Chordata</taxon>
        <taxon>Craniata</taxon>
        <taxon>Vertebrata</taxon>
        <taxon>Euteleostomi</taxon>
        <taxon>Mammalia</taxon>
        <taxon>Eutheria</taxon>
        <taxon>Euarchontoglires</taxon>
        <taxon>Glires</taxon>
        <taxon>Rodentia</taxon>
        <taxon>Myomorpha</taxon>
        <taxon>Muroidea</taxon>
        <taxon>Muridae</taxon>
        <taxon>Murinae</taxon>
        <taxon>Mus</taxon>
        <taxon>Mus</taxon>
    </lineage>
</organism>
<protein>
    <recommendedName>
        <fullName>GRB2-associated-binding protein 3</fullName>
    </recommendedName>
    <alternativeName>
        <fullName>GRB2-associated binder 3</fullName>
    </alternativeName>
    <alternativeName>
        <fullName>Growth factor receptor bound protein 2-associated protein 3</fullName>
    </alternativeName>
</protein>
<name>GAB3_MOUSE</name>
<proteinExistence type="evidence at protein level"/>
<gene>
    <name type="primary">Gab3</name>
</gene>
<evidence type="ECO:0000250" key="1">
    <source>
        <dbReference type="UniProtKB" id="Q8WWW8"/>
    </source>
</evidence>
<evidence type="ECO:0000255" key="2">
    <source>
        <dbReference type="PROSITE-ProRule" id="PRU00145"/>
    </source>
</evidence>
<evidence type="ECO:0000256" key="3">
    <source>
        <dbReference type="SAM" id="MobiDB-lite"/>
    </source>
</evidence>
<evidence type="ECO:0000269" key="4">
    <source>
    </source>
</evidence>
<evidence type="ECO:0000269" key="5">
    <source>
    </source>
</evidence>
<evidence type="ECO:0000305" key="6"/>
<keyword id="KW-0597">Phosphoprotein</keyword>
<keyword id="KW-1185">Reference proteome</keyword>
<accession>Q8BSM5</accession>
<accession>Q684I9</accession>
<accession>Q8VH53</accession>
<comment type="subunit">
    <text evidence="4 5">Interacts with PIK3R/p85, SHP2 and GRAP2/MONA. May interact with Grb2.</text>
</comment>
<comment type="tissue specificity">
    <text>Highly expressed in spleen and thymus and weakly in brain, heart, lung, kidney, uterus, and embryonic stem cells. Also expressed in myeloid and macrophage cell lines.</text>
</comment>
<comment type="PTM">
    <text evidence="4">Phosphorylated on tyrosine residue(s) after macrophage colony-stimulating factor (M-CSF) receptor stimulation.</text>
</comment>
<comment type="similarity">
    <text evidence="6">Belongs to the GAB family.</text>
</comment>
<feature type="chain" id="PRO_0000318940" description="GRB2-associated-binding protein 3">
    <location>
        <begin position="1"/>
        <end position="595"/>
    </location>
</feature>
<feature type="domain" description="PH" evidence="2">
    <location>
        <begin position="5"/>
        <end position="117"/>
    </location>
</feature>
<feature type="region of interest" description="Disordered" evidence="3">
    <location>
        <begin position="295"/>
        <end position="339"/>
    </location>
</feature>
<feature type="region of interest" description="Disordered" evidence="3">
    <location>
        <begin position="389"/>
        <end position="408"/>
    </location>
</feature>
<feature type="region of interest" description="Disordered" evidence="3">
    <location>
        <begin position="418"/>
        <end position="463"/>
    </location>
</feature>
<feature type="region of interest" description="Disordered" evidence="3">
    <location>
        <begin position="493"/>
        <end position="513"/>
    </location>
</feature>
<feature type="compositionally biased region" description="Polar residues" evidence="3">
    <location>
        <begin position="317"/>
        <end position="331"/>
    </location>
</feature>
<feature type="compositionally biased region" description="Polar residues" evidence="3">
    <location>
        <begin position="454"/>
        <end position="463"/>
    </location>
</feature>
<feature type="compositionally biased region" description="Acidic residues" evidence="3">
    <location>
        <begin position="496"/>
        <end position="513"/>
    </location>
</feature>
<feature type="modified residue" description="Phosphoserine" evidence="1">
    <location>
        <position position="346"/>
    </location>
</feature>
<feature type="modified residue" description="Phosphoserine" evidence="1">
    <location>
        <position position="480"/>
    </location>
</feature>
<feature type="sequence conflict" description="In Ref. 1; AAL25824." evidence="6" ref="1">
    <original>R</original>
    <variation>G</variation>
    <location>
        <position position="161"/>
    </location>
</feature>
<feature type="sequence conflict" description="In Ref. 1; AAL25824." evidence="6" ref="1">
    <original>T</original>
    <variation>I</variation>
    <location>
        <position position="306"/>
    </location>
</feature>
<feature type="sequence conflict" description="In Ref. 1; AAL25824." evidence="6" ref="1">
    <original>E</original>
    <variation>A</variation>
    <location>
        <position position="586"/>
    </location>
</feature>
<dbReference type="EMBL" id="AY057988">
    <property type="protein sequence ID" value="AAL25824.1"/>
    <property type="molecule type" value="mRNA"/>
</dbReference>
<dbReference type="EMBL" id="AK031227">
    <property type="protein sequence ID" value="BAC27308.1"/>
    <property type="molecule type" value="mRNA"/>
</dbReference>
<dbReference type="EMBL" id="AL808110">
    <property type="status" value="NOT_ANNOTATED_CDS"/>
    <property type="molecule type" value="Genomic_DNA"/>
</dbReference>
<dbReference type="EMBL" id="AL845304">
    <property type="status" value="NOT_ANNOTATED_CDS"/>
    <property type="molecule type" value="Genomic_DNA"/>
</dbReference>
<dbReference type="EMBL" id="AJ748654">
    <property type="protein sequence ID" value="CAG38688.1"/>
    <property type="molecule type" value="mRNA"/>
</dbReference>
<dbReference type="CCDS" id="CCDS30235.1"/>
<dbReference type="RefSeq" id="NP_853615.1">
    <property type="nucleotide sequence ID" value="NM_181584.4"/>
</dbReference>
<dbReference type="SMR" id="Q8BSM5"/>
<dbReference type="FunCoup" id="Q8BSM5">
    <property type="interactions" value="331"/>
</dbReference>
<dbReference type="STRING" id="10090.ENSMUSP00000041951"/>
<dbReference type="GlyGen" id="Q8BSM5">
    <property type="glycosylation" value="1 site"/>
</dbReference>
<dbReference type="iPTMnet" id="Q8BSM5"/>
<dbReference type="PhosphoSitePlus" id="Q8BSM5"/>
<dbReference type="PaxDb" id="10090-ENSMUSP00000041951"/>
<dbReference type="ProteomicsDB" id="271822"/>
<dbReference type="Antibodypedia" id="535">
    <property type="antibodies" value="128 antibodies from 24 providers"/>
</dbReference>
<dbReference type="DNASU" id="210710"/>
<dbReference type="Ensembl" id="ENSMUST00000037374.11">
    <property type="protein sequence ID" value="ENSMUSP00000041951.5"/>
    <property type="gene ID" value="ENSMUSG00000032750.14"/>
</dbReference>
<dbReference type="GeneID" id="210710"/>
<dbReference type="KEGG" id="mmu:210710"/>
<dbReference type="UCSC" id="uc009tpn.2">
    <property type="organism name" value="mouse"/>
</dbReference>
<dbReference type="AGR" id="MGI:2387324"/>
<dbReference type="CTD" id="139716"/>
<dbReference type="MGI" id="MGI:2387324">
    <property type="gene designation" value="Gab3"/>
</dbReference>
<dbReference type="VEuPathDB" id="HostDB:ENSMUSG00000032750"/>
<dbReference type="eggNOG" id="ENOG502QU11">
    <property type="taxonomic scope" value="Eukaryota"/>
</dbReference>
<dbReference type="GeneTree" id="ENSGT00940000159803"/>
<dbReference type="InParanoid" id="Q8BSM5"/>
<dbReference type="OMA" id="YIPMSPQ"/>
<dbReference type="OrthoDB" id="74773at9989"/>
<dbReference type="PhylomeDB" id="Q8BSM5"/>
<dbReference type="TreeFam" id="TF329487"/>
<dbReference type="BioGRID-ORCS" id="210710">
    <property type="hits" value="6 hits in 76 CRISPR screens"/>
</dbReference>
<dbReference type="ChiTaRS" id="Gab3">
    <property type="organism name" value="mouse"/>
</dbReference>
<dbReference type="PRO" id="PR:Q8BSM5"/>
<dbReference type="Proteomes" id="UP000000589">
    <property type="component" value="Chromosome X"/>
</dbReference>
<dbReference type="RNAct" id="Q8BSM5">
    <property type="molecule type" value="protein"/>
</dbReference>
<dbReference type="Bgee" id="ENSMUSG00000032750">
    <property type="expression patterns" value="Expressed in animal zygote and 71 other cell types or tissues"/>
</dbReference>
<dbReference type="ExpressionAtlas" id="Q8BSM5">
    <property type="expression patterns" value="baseline and differential"/>
</dbReference>
<dbReference type="GO" id="GO:0005829">
    <property type="term" value="C:cytosol"/>
    <property type="evidence" value="ECO:0000304"/>
    <property type="project" value="Reactome"/>
</dbReference>
<dbReference type="GO" id="GO:0030225">
    <property type="term" value="P:macrophage differentiation"/>
    <property type="evidence" value="ECO:0000314"/>
    <property type="project" value="MGI"/>
</dbReference>
<dbReference type="CDD" id="cd13385">
    <property type="entry name" value="PH_Gab3"/>
    <property type="match status" value="1"/>
</dbReference>
<dbReference type="Gene3D" id="2.30.29.30">
    <property type="entry name" value="Pleckstrin-homology domain (PH domain)/Phosphotyrosine-binding domain (PTB)"/>
    <property type="match status" value="1"/>
</dbReference>
<dbReference type="InterPro" id="IPR046355">
    <property type="entry name" value="Gab1-4-like"/>
</dbReference>
<dbReference type="InterPro" id="IPR011993">
    <property type="entry name" value="PH-like_dom_sf"/>
</dbReference>
<dbReference type="InterPro" id="IPR001849">
    <property type="entry name" value="PH_domain"/>
</dbReference>
<dbReference type="PANTHER" id="PTHR45960">
    <property type="entry name" value="GRB2-ASSOCIATED-BINDING PROTEIN"/>
    <property type="match status" value="1"/>
</dbReference>
<dbReference type="PANTHER" id="PTHR45960:SF3">
    <property type="entry name" value="GRB2-ASSOCIATED-BINDING PROTEIN 3"/>
    <property type="match status" value="1"/>
</dbReference>
<dbReference type="Pfam" id="PF00169">
    <property type="entry name" value="PH"/>
    <property type="match status" value="1"/>
</dbReference>
<dbReference type="SMART" id="SM00233">
    <property type="entry name" value="PH"/>
    <property type="match status" value="1"/>
</dbReference>
<dbReference type="SUPFAM" id="SSF50729">
    <property type="entry name" value="PH domain-like"/>
    <property type="match status" value="1"/>
</dbReference>
<dbReference type="PROSITE" id="PS50003">
    <property type="entry name" value="PH_DOMAIN"/>
    <property type="match status" value="1"/>
</dbReference>